<proteinExistence type="inferred from homology"/>
<gene>
    <name evidence="1" type="primary">uvrC</name>
    <name type="ordered locus">Moth_0256</name>
</gene>
<keyword id="KW-0963">Cytoplasm</keyword>
<keyword id="KW-0227">DNA damage</keyword>
<keyword id="KW-0228">DNA excision</keyword>
<keyword id="KW-0234">DNA repair</keyword>
<keyword id="KW-0267">Excision nuclease</keyword>
<keyword id="KW-0742">SOS response</keyword>
<feature type="chain" id="PRO_0000264912" description="UvrABC system protein C">
    <location>
        <begin position="1"/>
        <end position="613"/>
    </location>
</feature>
<feature type="domain" description="GIY-YIG" evidence="1">
    <location>
        <begin position="12"/>
        <end position="89"/>
    </location>
</feature>
<feature type="domain" description="UVR" evidence="1">
    <location>
        <begin position="199"/>
        <end position="234"/>
    </location>
</feature>
<name>UVRC_MOOTA</name>
<organism>
    <name type="scientific">Moorella thermoacetica (strain ATCC 39073 / JCM 9320)</name>
    <dbReference type="NCBI Taxonomy" id="264732"/>
    <lineage>
        <taxon>Bacteria</taxon>
        <taxon>Bacillati</taxon>
        <taxon>Bacillota</taxon>
        <taxon>Clostridia</taxon>
        <taxon>Moorellales</taxon>
        <taxon>Moorellaceae</taxon>
        <taxon>Moorella</taxon>
    </lineage>
</organism>
<comment type="function">
    <text evidence="1">The UvrABC repair system catalyzes the recognition and processing of DNA lesions. UvrC both incises the 5' and 3' sides of the lesion. The N-terminal half is responsible for the 3' incision and the C-terminal half is responsible for the 5' incision.</text>
</comment>
<comment type="subunit">
    <text evidence="1">Interacts with UvrB in an incision complex.</text>
</comment>
<comment type="subcellular location">
    <subcellularLocation>
        <location evidence="1">Cytoplasm</location>
    </subcellularLocation>
</comment>
<comment type="similarity">
    <text evidence="1">Belongs to the UvrC family.</text>
</comment>
<evidence type="ECO:0000255" key="1">
    <source>
        <dbReference type="HAMAP-Rule" id="MF_00203"/>
    </source>
</evidence>
<reference key="1">
    <citation type="journal article" date="2008" name="Environ. Microbiol.">
        <title>The complete genome sequence of Moorella thermoacetica (f. Clostridium thermoaceticum).</title>
        <authorList>
            <person name="Pierce E."/>
            <person name="Xie G."/>
            <person name="Barabote R.D."/>
            <person name="Saunders E."/>
            <person name="Han C.S."/>
            <person name="Detter J.C."/>
            <person name="Richardson P."/>
            <person name="Brettin T.S."/>
            <person name="Das A."/>
            <person name="Ljungdahl L.G."/>
            <person name="Ragsdale S.W."/>
        </authorList>
    </citation>
    <scope>NUCLEOTIDE SEQUENCE [LARGE SCALE GENOMIC DNA]</scope>
    <source>
        <strain>ATCC 39073 / JCM 9320</strain>
    </source>
</reference>
<sequence>MDLEEKLARLPDHPGVYIMHDANGAIIYVGKAASLRNRVRSYFRGQHQPRTQAMVSHVADFEYILTDNEVEALILECNLIKQHRPRYNVSLKDDKSYPYIKITTQEDFPRIQITRSVTRDGSRYFGPYTSAGSLKETLKLLRGLFPIRTCRDTPLQPRSRPCLNAHIGRCLAPCAGQVDRETYREAVDNVIMFLEGRHTALVKELKEQMEAAAARLEFEKAARLRDQLRAVQEVCEKQKLAAASGEDADAIAFAREGEAALGLIFFSRGGKVIGRDHFFLTGSEGLSRGEVMAALLKEYYSRGVEIPPEILLHDEPEDAATIASWLSRLRGGRVNLRVPKRGTKLKLLRLVHENAVSLLQEHLLTRRRQEEGSRAALLELQEILELPRLPRRMEAYDISNFQGSSQVGAMAVFVDGRPLPSAYRRFQIKTVRGPNDFASLQEVLSRRFRRAAEQDPHFADLPDFVLIDGGLGQLHAARETMEAMGVGYIPTFGLAKEEELLFRVGTSEPIRLPRESKALQILQHLRDEVHRFAITYHRQKREKTAYRSVLDDIPGVGPKRKKALLRHFGSVAAISKATLEDLLAVEGMNRTVAARILAGLGRRSDGEDSTGSP</sequence>
<dbReference type="EMBL" id="CP000232">
    <property type="protein sequence ID" value="ABC18591.1"/>
    <property type="molecule type" value="Genomic_DNA"/>
</dbReference>
<dbReference type="RefSeq" id="YP_429134.1">
    <property type="nucleotide sequence ID" value="NC_007644.1"/>
</dbReference>
<dbReference type="SMR" id="Q2RLU8"/>
<dbReference type="STRING" id="264732.Moth_0256"/>
<dbReference type="EnsemblBacteria" id="ABC18591">
    <property type="protein sequence ID" value="ABC18591"/>
    <property type="gene ID" value="Moth_0256"/>
</dbReference>
<dbReference type="KEGG" id="mta:Moth_0256"/>
<dbReference type="PATRIC" id="fig|264732.11.peg.272"/>
<dbReference type="eggNOG" id="COG0322">
    <property type="taxonomic scope" value="Bacteria"/>
</dbReference>
<dbReference type="HOGENOM" id="CLU_014841_3_2_9"/>
<dbReference type="OrthoDB" id="9804933at2"/>
<dbReference type="GO" id="GO:0005737">
    <property type="term" value="C:cytoplasm"/>
    <property type="evidence" value="ECO:0007669"/>
    <property type="project" value="UniProtKB-SubCell"/>
</dbReference>
<dbReference type="GO" id="GO:0009380">
    <property type="term" value="C:excinuclease repair complex"/>
    <property type="evidence" value="ECO:0007669"/>
    <property type="project" value="InterPro"/>
</dbReference>
<dbReference type="GO" id="GO:0003677">
    <property type="term" value="F:DNA binding"/>
    <property type="evidence" value="ECO:0007669"/>
    <property type="project" value="UniProtKB-UniRule"/>
</dbReference>
<dbReference type="GO" id="GO:0009381">
    <property type="term" value="F:excinuclease ABC activity"/>
    <property type="evidence" value="ECO:0007669"/>
    <property type="project" value="UniProtKB-UniRule"/>
</dbReference>
<dbReference type="GO" id="GO:0006289">
    <property type="term" value="P:nucleotide-excision repair"/>
    <property type="evidence" value="ECO:0007669"/>
    <property type="project" value="UniProtKB-UniRule"/>
</dbReference>
<dbReference type="GO" id="GO:0009432">
    <property type="term" value="P:SOS response"/>
    <property type="evidence" value="ECO:0007669"/>
    <property type="project" value="UniProtKB-UniRule"/>
</dbReference>
<dbReference type="CDD" id="cd10434">
    <property type="entry name" value="GIY-YIG_UvrC_Cho"/>
    <property type="match status" value="1"/>
</dbReference>
<dbReference type="FunFam" id="3.40.1440.10:FF:000001">
    <property type="entry name" value="UvrABC system protein C"/>
    <property type="match status" value="1"/>
</dbReference>
<dbReference type="Gene3D" id="1.10.150.20">
    <property type="entry name" value="5' to 3' exonuclease, C-terminal subdomain"/>
    <property type="match status" value="1"/>
</dbReference>
<dbReference type="Gene3D" id="3.40.1440.10">
    <property type="entry name" value="GIY-YIG endonuclease"/>
    <property type="match status" value="1"/>
</dbReference>
<dbReference type="Gene3D" id="4.10.860.10">
    <property type="entry name" value="UVR domain"/>
    <property type="match status" value="1"/>
</dbReference>
<dbReference type="Gene3D" id="3.30.420.340">
    <property type="entry name" value="UvrC, RNAse H endonuclease domain"/>
    <property type="match status" value="1"/>
</dbReference>
<dbReference type="HAMAP" id="MF_00203">
    <property type="entry name" value="UvrC"/>
    <property type="match status" value="1"/>
</dbReference>
<dbReference type="InterPro" id="IPR000305">
    <property type="entry name" value="GIY-YIG_endonuc"/>
</dbReference>
<dbReference type="InterPro" id="IPR035901">
    <property type="entry name" value="GIY-YIG_endonuc_sf"/>
</dbReference>
<dbReference type="InterPro" id="IPR047296">
    <property type="entry name" value="GIY-YIG_UvrC_Cho"/>
</dbReference>
<dbReference type="InterPro" id="IPR003583">
    <property type="entry name" value="Hlx-hairpin-Hlx_DNA-bd_motif"/>
</dbReference>
<dbReference type="InterPro" id="IPR010994">
    <property type="entry name" value="RuvA_2-like"/>
</dbReference>
<dbReference type="InterPro" id="IPR001943">
    <property type="entry name" value="UVR_dom"/>
</dbReference>
<dbReference type="InterPro" id="IPR036876">
    <property type="entry name" value="UVR_dom_sf"/>
</dbReference>
<dbReference type="InterPro" id="IPR050066">
    <property type="entry name" value="UvrABC_protein_C"/>
</dbReference>
<dbReference type="InterPro" id="IPR004791">
    <property type="entry name" value="UvrC"/>
</dbReference>
<dbReference type="InterPro" id="IPR001162">
    <property type="entry name" value="UvrC_RNase_H_dom"/>
</dbReference>
<dbReference type="InterPro" id="IPR038476">
    <property type="entry name" value="UvrC_RNase_H_dom_sf"/>
</dbReference>
<dbReference type="NCBIfam" id="NF001824">
    <property type="entry name" value="PRK00558.1-5"/>
    <property type="match status" value="1"/>
</dbReference>
<dbReference type="NCBIfam" id="TIGR00194">
    <property type="entry name" value="uvrC"/>
    <property type="match status" value="1"/>
</dbReference>
<dbReference type="PANTHER" id="PTHR30562:SF1">
    <property type="entry name" value="UVRABC SYSTEM PROTEIN C"/>
    <property type="match status" value="1"/>
</dbReference>
<dbReference type="PANTHER" id="PTHR30562">
    <property type="entry name" value="UVRC/OXIDOREDUCTASE"/>
    <property type="match status" value="1"/>
</dbReference>
<dbReference type="Pfam" id="PF01541">
    <property type="entry name" value="GIY-YIG"/>
    <property type="match status" value="1"/>
</dbReference>
<dbReference type="Pfam" id="PF14520">
    <property type="entry name" value="HHH_5"/>
    <property type="match status" value="1"/>
</dbReference>
<dbReference type="Pfam" id="PF02151">
    <property type="entry name" value="UVR"/>
    <property type="match status" value="1"/>
</dbReference>
<dbReference type="Pfam" id="PF22920">
    <property type="entry name" value="UvrC_RNaseH"/>
    <property type="match status" value="1"/>
</dbReference>
<dbReference type="Pfam" id="PF08459">
    <property type="entry name" value="UvrC_RNaseH_dom"/>
    <property type="match status" value="1"/>
</dbReference>
<dbReference type="SMART" id="SM00465">
    <property type="entry name" value="GIYc"/>
    <property type="match status" value="1"/>
</dbReference>
<dbReference type="SMART" id="SM00278">
    <property type="entry name" value="HhH1"/>
    <property type="match status" value="2"/>
</dbReference>
<dbReference type="SUPFAM" id="SSF46600">
    <property type="entry name" value="C-terminal UvrC-binding domain of UvrB"/>
    <property type="match status" value="1"/>
</dbReference>
<dbReference type="SUPFAM" id="SSF82771">
    <property type="entry name" value="GIY-YIG endonuclease"/>
    <property type="match status" value="1"/>
</dbReference>
<dbReference type="SUPFAM" id="SSF47781">
    <property type="entry name" value="RuvA domain 2-like"/>
    <property type="match status" value="1"/>
</dbReference>
<dbReference type="PROSITE" id="PS50164">
    <property type="entry name" value="GIY_YIG"/>
    <property type="match status" value="1"/>
</dbReference>
<dbReference type="PROSITE" id="PS50151">
    <property type="entry name" value="UVR"/>
    <property type="match status" value="1"/>
</dbReference>
<dbReference type="PROSITE" id="PS50165">
    <property type="entry name" value="UVRC"/>
    <property type="match status" value="1"/>
</dbReference>
<accession>Q2RLU8</accession>
<protein>
    <recommendedName>
        <fullName evidence="1">UvrABC system protein C</fullName>
        <shortName evidence="1">Protein UvrC</shortName>
    </recommendedName>
    <alternativeName>
        <fullName evidence="1">Excinuclease ABC subunit C</fullName>
    </alternativeName>
</protein>